<keyword id="KW-1185">Reference proteome</keyword>
<keyword id="KW-0687">Ribonucleoprotein</keyword>
<keyword id="KW-0689">Ribosomal protein</keyword>
<name>RL34_RHOCS</name>
<gene>
    <name evidence="1" type="primary">rpmH</name>
    <name type="ordered locus">RC1_2281</name>
</gene>
<reference key="1">
    <citation type="submission" date="2007-03" db="EMBL/GenBank/DDBJ databases">
        <title>Genome sequence of Rhodospirillum centenum.</title>
        <authorList>
            <person name="Touchman J.W."/>
            <person name="Bauer C."/>
            <person name="Blankenship R.E."/>
        </authorList>
    </citation>
    <scope>NUCLEOTIDE SEQUENCE [LARGE SCALE GENOMIC DNA]</scope>
    <source>
        <strain>ATCC 51521 / SW</strain>
    </source>
</reference>
<feature type="chain" id="PRO_1000196098" description="Large ribosomal subunit protein bL34">
    <location>
        <begin position="1"/>
        <end position="44"/>
    </location>
</feature>
<accession>B6IPG6</accession>
<proteinExistence type="inferred from homology"/>
<protein>
    <recommendedName>
        <fullName evidence="1">Large ribosomal subunit protein bL34</fullName>
    </recommendedName>
    <alternativeName>
        <fullName evidence="2">50S ribosomal protein L34</fullName>
    </alternativeName>
</protein>
<dbReference type="EMBL" id="CP000613">
    <property type="protein sequence ID" value="ACI99668.1"/>
    <property type="molecule type" value="Genomic_DNA"/>
</dbReference>
<dbReference type="RefSeq" id="WP_012567453.1">
    <property type="nucleotide sequence ID" value="NC_011420.2"/>
</dbReference>
<dbReference type="SMR" id="B6IPG6"/>
<dbReference type="STRING" id="414684.RC1_2281"/>
<dbReference type="KEGG" id="rce:RC1_2281"/>
<dbReference type="eggNOG" id="COG0230">
    <property type="taxonomic scope" value="Bacteria"/>
</dbReference>
<dbReference type="HOGENOM" id="CLU_129938_2_0_5"/>
<dbReference type="OrthoDB" id="9804164at2"/>
<dbReference type="Proteomes" id="UP000001591">
    <property type="component" value="Chromosome"/>
</dbReference>
<dbReference type="GO" id="GO:1990904">
    <property type="term" value="C:ribonucleoprotein complex"/>
    <property type="evidence" value="ECO:0007669"/>
    <property type="project" value="UniProtKB-KW"/>
</dbReference>
<dbReference type="GO" id="GO:0005840">
    <property type="term" value="C:ribosome"/>
    <property type="evidence" value="ECO:0007669"/>
    <property type="project" value="UniProtKB-KW"/>
</dbReference>
<dbReference type="GO" id="GO:0003735">
    <property type="term" value="F:structural constituent of ribosome"/>
    <property type="evidence" value="ECO:0007669"/>
    <property type="project" value="InterPro"/>
</dbReference>
<dbReference type="GO" id="GO:0006412">
    <property type="term" value="P:translation"/>
    <property type="evidence" value="ECO:0007669"/>
    <property type="project" value="UniProtKB-UniRule"/>
</dbReference>
<dbReference type="FunFam" id="1.10.287.3980:FF:000001">
    <property type="entry name" value="Mitochondrial ribosomal protein L34"/>
    <property type="match status" value="1"/>
</dbReference>
<dbReference type="Gene3D" id="1.10.287.3980">
    <property type="match status" value="1"/>
</dbReference>
<dbReference type="HAMAP" id="MF_00391">
    <property type="entry name" value="Ribosomal_bL34"/>
    <property type="match status" value="1"/>
</dbReference>
<dbReference type="InterPro" id="IPR000271">
    <property type="entry name" value="Ribosomal_bL34"/>
</dbReference>
<dbReference type="InterPro" id="IPR020939">
    <property type="entry name" value="Ribosomal_bL34_CS"/>
</dbReference>
<dbReference type="NCBIfam" id="TIGR01030">
    <property type="entry name" value="rpmH_bact"/>
    <property type="match status" value="1"/>
</dbReference>
<dbReference type="PANTHER" id="PTHR14503:SF4">
    <property type="entry name" value="LARGE RIBOSOMAL SUBUNIT PROTEIN BL34M"/>
    <property type="match status" value="1"/>
</dbReference>
<dbReference type="PANTHER" id="PTHR14503">
    <property type="entry name" value="MITOCHONDRIAL RIBOSOMAL PROTEIN 34 FAMILY MEMBER"/>
    <property type="match status" value="1"/>
</dbReference>
<dbReference type="Pfam" id="PF00468">
    <property type="entry name" value="Ribosomal_L34"/>
    <property type="match status" value="1"/>
</dbReference>
<dbReference type="PROSITE" id="PS00784">
    <property type="entry name" value="RIBOSOMAL_L34"/>
    <property type="match status" value="1"/>
</dbReference>
<evidence type="ECO:0000255" key="1">
    <source>
        <dbReference type="HAMAP-Rule" id="MF_00391"/>
    </source>
</evidence>
<evidence type="ECO:0000305" key="2"/>
<organism>
    <name type="scientific">Rhodospirillum centenum (strain ATCC 51521 / SW)</name>
    <dbReference type="NCBI Taxonomy" id="414684"/>
    <lineage>
        <taxon>Bacteria</taxon>
        <taxon>Pseudomonadati</taxon>
        <taxon>Pseudomonadota</taxon>
        <taxon>Alphaproteobacteria</taxon>
        <taxon>Rhodospirillales</taxon>
        <taxon>Rhodospirillaceae</taxon>
        <taxon>Rhodospirillum</taxon>
    </lineage>
</organism>
<comment type="similarity">
    <text evidence="1">Belongs to the bacterial ribosomal protein bL34 family.</text>
</comment>
<sequence>MKRTFQPSKLVRKRRHGFRARMATVGGRKVLARRRAQGRKRLSA</sequence>